<protein>
    <recommendedName>
        <fullName>Protein FAM171A1</fullName>
    </recommendedName>
</protein>
<keyword id="KW-1003">Cell membrane</keyword>
<keyword id="KW-0325">Glycoprotein</keyword>
<keyword id="KW-0472">Membrane</keyword>
<keyword id="KW-1185">Reference proteome</keyword>
<keyword id="KW-0732">Signal</keyword>
<keyword id="KW-0812">Transmembrane</keyword>
<keyword id="KW-1133">Transmembrane helix</keyword>
<organism>
    <name type="scientific">Xenopus laevis</name>
    <name type="common">African clawed frog</name>
    <dbReference type="NCBI Taxonomy" id="8355"/>
    <lineage>
        <taxon>Eukaryota</taxon>
        <taxon>Metazoa</taxon>
        <taxon>Chordata</taxon>
        <taxon>Craniata</taxon>
        <taxon>Vertebrata</taxon>
        <taxon>Euteleostomi</taxon>
        <taxon>Amphibia</taxon>
        <taxon>Batrachia</taxon>
        <taxon>Anura</taxon>
        <taxon>Pipoidea</taxon>
        <taxon>Pipidae</taxon>
        <taxon>Xenopodinae</taxon>
        <taxon>Xenopus</taxon>
        <taxon>Xenopus</taxon>
    </lineage>
</organism>
<dbReference type="EMBL" id="BC086468">
    <property type="protein sequence ID" value="AAH86468.1"/>
    <property type="molecule type" value="mRNA"/>
</dbReference>
<dbReference type="RefSeq" id="NP_001088656.1">
    <property type="nucleotide sequence ID" value="NM_001095187.1"/>
</dbReference>
<dbReference type="GlyCosmos" id="Q5RJX2">
    <property type="glycosylation" value="3 sites, No reported glycans"/>
</dbReference>
<dbReference type="DNASU" id="495830"/>
<dbReference type="GeneID" id="495830"/>
<dbReference type="KEGG" id="xla:495830"/>
<dbReference type="AGR" id="Xenbase:XB-GENE-5725449"/>
<dbReference type="CTD" id="495830"/>
<dbReference type="Xenbase" id="XB-GENE-5725449">
    <property type="gene designation" value="fam171a1.L"/>
</dbReference>
<dbReference type="OMA" id="PAECMMS"/>
<dbReference type="OrthoDB" id="8762914at2759"/>
<dbReference type="Proteomes" id="UP000186698">
    <property type="component" value="Chromosome 6L"/>
</dbReference>
<dbReference type="Bgee" id="495830">
    <property type="expression patterns" value="Expressed in internal ear and 19 other cell types or tissues"/>
</dbReference>
<dbReference type="GO" id="GO:0005886">
    <property type="term" value="C:plasma membrane"/>
    <property type="evidence" value="ECO:0000250"/>
    <property type="project" value="UniProtKB"/>
</dbReference>
<dbReference type="GO" id="GO:0008360">
    <property type="term" value="P:regulation of cell shape"/>
    <property type="evidence" value="ECO:0000250"/>
    <property type="project" value="UniProtKB"/>
</dbReference>
<dbReference type="GO" id="GO:0043149">
    <property type="term" value="P:stress fiber assembly"/>
    <property type="evidence" value="ECO:0000250"/>
    <property type="project" value="UniProtKB"/>
</dbReference>
<dbReference type="InterPro" id="IPR018890">
    <property type="entry name" value="FAM171"/>
</dbReference>
<dbReference type="InterPro" id="IPR049175">
    <property type="entry name" value="FAM171_C"/>
</dbReference>
<dbReference type="InterPro" id="IPR048530">
    <property type="entry name" value="FAM171_N"/>
</dbReference>
<dbReference type="PANTHER" id="PTHR31626:SF1">
    <property type="entry name" value="PROTEIN FAM171A1"/>
    <property type="match status" value="1"/>
</dbReference>
<dbReference type="PANTHER" id="PTHR31626">
    <property type="entry name" value="SUSHI DOMAIN-CONTAINING PROTEIN"/>
    <property type="match status" value="1"/>
</dbReference>
<dbReference type="Pfam" id="PF20771">
    <property type="entry name" value="FAM171A1-2-B_C"/>
    <property type="match status" value="1"/>
</dbReference>
<dbReference type="Pfam" id="PF10577">
    <property type="entry name" value="FAM171A1-2-B_N"/>
    <property type="match status" value="1"/>
</dbReference>
<feature type="signal peptide" evidence="2">
    <location>
        <begin position="1"/>
        <end position="20"/>
    </location>
</feature>
<feature type="chain" id="PRO_0000274265" description="Protein FAM171A1">
    <location>
        <begin position="21"/>
        <end position="859"/>
    </location>
</feature>
<feature type="topological domain" description="Extracellular" evidence="2">
    <location>
        <begin position="21"/>
        <end position="307"/>
    </location>
</feature>
<feature type="transmembrane region" description="Helical" evidence="2">
    <location>
        <begin position="308"/>
        <end position="328"/>
    </location>
</feature>
<feature type="topological domain" description="Cytoplasmic" evidence="2">
    <location>
        <begin position="329"/>
        <end position="859"/>
    </location>
</feature>
<feature type="region of interest" description="Disordered" evidence="3">
    <location>
        <begin position="397"/>
        <end position="421"/>
    </location>
</feature>
<feature type="region of interest" description="Disordered" evidence="3">
    <location>
        <begin position="484"/>
        <end position="509"/>
    </location>
</feature>
<feature type="region of interest" description="Disordered" evidence="3">
    <location>
        <begin position="771"/>
        <end position="859"/>
    </location>
</feature>
<feature type="compositionally biased region" description="Basic and acidic residues" evidence="3">
    <location>
        <begin position="400"/>
        <end position="416"/>
    </location>
</feature>
<feature type="compositionally biased region" description="Polar residues" evidence="3">
    <location>
        <begin position="484"/>
        <end position="497"/>
    </location>
</feature>
<feature type="compositionally biased region" description="Polar residues" evidence="3">
    <location>
        <begin position="797"/>
        <end position="806"/>
    </location>
</feature>
<feature type="compositionally biased region" description="Basic and acidic residues" evidence="3">
    <location>
        <begin position="838"/>
        <end position="852"/>
    </location>
</feature>
<feature type="glycosylation site" description="N-linked (GlcNAc...) asparagine" evidence="2">
    <location>
        <position position="163"/>
    </location>
</feature>
<feature type="glycosylation site" description="N-linked (GlcNAc...) asparagine" evidence="2">
    <location>
        <position position="194"/>
    </location>
</feature>
<feature type="glycosylation site" description="N-linked (GlcNAc...) asparagine" evidence="2">
    <location>
        <position position="198"/>
    </location>
</feature>
<reference key="1">
    <citation type="submission" date="2004-11" db="EMBL/GenBank/DDBJ databases">
        <authorList>
            <consortium name="NIH - Xenopus Gene Collection (XGC) project"/>
        </authorList>
    </citation>
    <scope>NUCLEOTIDE SEQUENCE [LARGE SCALE MRNA]</scope>
    <source>
        <tissue>Embryo</tissue>
    </source>
</reference>
<accession>Q5RJX2</accession>
<comment type="function">
    <text evidence="1">May be involved in the regulation of the cytoskeletal dynamics, plays a role in actin stress fiber formation.</text>
</comment>
<comment type="subcellular location">
    <subcellularLocation>
        <location evidence="1">Cell membrane</location>
        <topology evidence="1">Single-pass type I membrane protein</topology>
    </subcellularLocation>
</comment>
<comment type="similarity">
    <text evidence="4">Belongs to the FAM171 family.</text>
</comment>
<name>F1711_XENLA</name>
<sequence>MSGSTAVALLFCVLSCSVWGAGSKASHEHNAAAAAQDVTLKVQVSDVSTHQPIADAVIEIFANQVSAASGTTGADGTALVKLQYKLGSQLIVTATKQAYVPNSAPWRPLRLPVFSSLSLGLLPERSATLMVYDDIVQIVSGFQGSRLQPRVHFQRRALNLPGNATYKDLAAFLTAASTPWEIDSFPYLQGSDGNSTGNNSRFDLTPVTAVSFHLLNSDGTDIPVNGPIYVTVPLPTHSSLKHNAHVPAWRFDQKHGTWLKSSIGIIQQEGSQLTWTYIAPQMGYWVAAMSPSHPDPVVTQDITSYHTIFLLAILGGIAFILLVLLCILLYYCRRKCLKPRQHHRKLQLSTALDCSKKDQATSMSHINLISPIHMEMLSSSGEADMHTPMLKPSYNTSRDFGSREELLSHQEEKSRMSLDNLTPSGTLRQVYNKSLDHILMKSRKSAEISEEYTSTMKDEYRRSYNSVICQPLFESKDKDLLSSTNHVTAGSKPNIQEQMHPVPSAPEPEQLIDRRSNECMMSRSVDHLERPTSFSRPGQLICYNSVDQVNDSVYRNVLPTLVIPAHYVKLPGEHPFVSQQLIVSAEQQFEIERLQAELSHAQQMQPPPLSAQAISQQHLQDGEGVEWSTQNAMMSESVSIPASLNDAAIAQMNGEVQLLTEKALMELGGGRPMPHPRAWFVSLDGRSNAHIRHSYIDLQRAGKNGSNDASLDSGVDMNEPKLGRKLRGEKLSMLHSSMQHPTLQEHQQLNQVNVSDSTAYTQLVYLEDMDQSPSECGTAVCSPEDSRPFIEAPAKKSGSQTPSLQEETIKRTTESSPLPLSSPEHEFNINDDSGEDQGENKKSPWQKREERPLLAFNKK</sequence>
<proteinExistence type="evidence at transcript level"/>
<evidence type="ECO:0000250" key="1">
    <source>
        <dbReference type="UniProtKB" id="Q5VUB5"/>
    </source>
</evidence>
<evidence type="ECO:0000255" key="2"/>
<evidence type="ECO:0000256" key="3">
    <source>
        <dbReference type="SAM" id="MobiDB-lite"/>
    </source>
</evidence>
<evidence type="ECO:0000305" key="4"/>
<gene>
    <name type="primary">fam171a1</name>
</gene>